<name>NOTF_ASPVE</name>
<feature type="chain" id="PRO_0000430694" description="Deoxybrevianamide E synthase">
    <location>
        <begin position="1"/>
        <end position="435"/>
    </location>
</feature>
<feature type="region of interest" description="Disordered" evidence="2">
    <location>
        <begin position="1"/>
        <end position="28"/>
    </location>
</feature>
<feature type="binding site" evidence="1">
    <location>
        <position position="96"/>
    </location>
    <ligand>
        <name>brevianamide F</name>
        <dbReference type="ChEBI" id="CHEBI:64530"/>
    </ligand>
</feature>
<feature type="binding site" evidence="1">
    <location>
        <position position="110"/>
    </location>
    <ligand>
        <name>dimethylallyl diphosphate</name>
        <dbReference type="ChEBI" id="CHEBI:57623"/>
    </ligand>
</feature>
<feature type="binding site" evidence="1">
    <location>
        <position position="195"/>
    </location>
    <ligand>
        <name>dimethylallyl diphosphate</name>
        <dbReference type="ChEBI" id="CHEBI:57623"/>
    </ligand>
</feature>
<feature type="binding site" evidence="1">
    <location>
        <position position="197"/>
    </location>
    <ligand>
        <name>dimethylallyl diphosphate</name>
        <dbReference type="ChEBI" id="CHEBI:57623"/>
    </ligand>
</feature>
<feature type="binding site" evidence="1">
    <location>
        <position position="265"/>
    </location>
    <ligand>
        <name>dimethylallyl diphosphate</name>
        <dbReference type="ChEBI" id="CHEBI:57623"/>
    </ligand>
</feature>
<feature type="binding site" evidence="1">
    <location>
        <position position="267"/>
    </location>
    <ligand>
        <name>dimethylallyl diphosphate</name>
        <dbReference type="ChEBI" id="CHEBI:57623"/>
    </ligand>
</feature>
<feature type="binding site" evidence="1">
    <location>
        <position position="354"/>
    </location>
    <ligand>
        <name>dimethylallyl diphosphate</name>
        <dbReference type="ChEBI" id="CHEBI:57623"/>
    </ligand>
</feature>
<feature type="binding site" evidence="1">
    <location>
        <position position="419"/>
    </location>
    <ligand>
        <name>dimethylallyl diphosphate</name>
        <dbReference type="ChEBI" id="CHEBI:57623"/>
    </ligand>
</feature>
<feature type="binding site" evidence="1">
    <location>
        <position position="423"/>
    </location>
    <ligand>
        <name>dimethylallyl diphosphate</name>
        <dbReference type="ChEBI" id="CHEBI:57623"/>
    </ligand>
</feature>
<feature type="site" description="Required for regioselectivity" evidence="1">
    <location>
        <position position="112"/>
    </location>
</feature>
<feature type="sequence variant" description="In strain: NRRL 35600." evidence="5">
    <original>R</original>
    <variation>S</variation>
    <location>
        <position position="7"/>
    </location>
</feature>
<feature type="sequence variant" description="In strain: NRRL 35600." evidence="5">
    <original>D</original>
    <variation>G</variation>
    <location>
        <position position="435"/>
    </location>
</feature>
<evidence type="ECO:0000250" key="1">
    <source>
        <dbReference type="UniProtKB" id="Q4WAW7"/>
    </source>
</evidence>
<evidence type="ECO:0000256" key="2">
    <source>
        <dbReference type="SAM" id="MobiDB-lite"/>
    </source>
</evidence>
<evidence type="ECO:0000269" key="3">
    <source>
    </source>
</evidence>
<evidence type="ECO:0000269" key="4">
    <source>
    </source>
</evidence>
<evidence type="ECO:0000269" key="5">
    <source>
    </source>
</evidence>
<evidence type="ECO:0000303" key="6">
    <source>
    </source>
</evidence>
<evidence type="ECO:0000303" key="7">
    <source>
    </source>
</evidence>
<evidence type="ECO:0000305" key="8"/>
<evidence type="ECO:0000305" key="9">
    <source>
    </source>
</evidence>
<comment type="function">
    <text evidence="4 5 9">Deoxybrevianamide E synthase; part of the gene cluster that mediates the biosynthesis of notoamide, a fungal indole alkaloid that belongs to a family of natural products containing a characteristic bicyclo[2.2.2]diazaoctane core (PubMed:23213353). The first step of notoamide biosynthesis involves coupling of L-proline and L-tryptophan by the bimodular NRPS notE', to produce cyclo-L-tryptophan-L-proline called brevianamide F (Probable). The reverse prenyltransferase notF' then acts as a deoxybrevianamide E synthase and converts brevianamide F to deoxybrevianamide E via reverse prenylation at C-2 of the indole ring leading to the bicyclo[2.2.2]diazaoctane core (PubMed:22660767). Deoxybrevianamide E is further hydroxylated at C-6 of the indole ring, likely catalyzed by the cytochrome P450 monooxygenase notG', to yield 6-hydroxy-deoxybrevianamide E (Probable). 6-hydroxy-deoxybrevianamide E is a specific substrate of the prenyltransferase notC' for normal prenylation at C-7 to produce 6-hydroxy-7-prenyl-deoxybrevianamide, also called notoamide S (Probable). As the proposed pivotal branching point in notoamide biosynthesis, notoamide S can be diverted to notoamide E through an oxidative pyran ring closure putatively catalyzed by either notH' cytochrome P450 monooxygenase or the notD' FAD-linked oxidoreductase (Probable). This step would be followed by an indole 2,3-epoxidation-initiated pinacol-like rearrangement catalyzed by the notB' FAD-dependent monooxygenase leading to the formation of notoamide C and notoamide D (Probable). On the other hand notoamide S is converted to notoamide T by notH' (or notD'), a bifunctional oxidase that also functions as the intramolecular Diels-Alderase responsible for generation of (-)-notoamide T (Probable). To generate antipodal (+)-notoaminide T, notH (or notD) in Aspergillus strain MF297-2 is expected to catalyze a Diels-Alder reaction leading to the opposite stereochemistry (Probable). The remaining oxidoreductase notD' (or notH') likely catalyzes the oxidative pyran ring formation to yield (-)-stephacidin A (Probable). The FAD-dependent monooxygenase notI' is highly similar to notB' and is predicted to catalyze a similar conversion from (-)-stephacidin A to (+)-notoamide B via the 2,3-epoxidation of (-)-stephacidin A followed by a pinacol-type rearrangement (Probable). Finally, it remains unclear which enzyme could be responsible for the final hydroxylation steps leading to notoamide A and sclerotiamide (Probable).</text>
</comment>
<comment type="catalytic activity">
    <reaction evidence="4">
        <text>brevianamide F + dimethylallyl diphosphate = deoxybrevianamide E + diphosphate</text>
        <dbReference type="Rhea" id="RHEA:35943"/>
        <dbReference type="ChEBI" id="CHEBI:33019"/>
        <dbReference type="ChEBI" id="CHEBI:57623"/>
        <dbReference type="ChEBI" id="CHEBI:64530"/>
        <dbReference type="ChEBI" id="CHEBI:72948"/>
        <dbReference type="EC" id="2.5.1.109"/>
    </reaction>
    <physiologicalReaction direction="left-to-right" evidence="4">
        <dbReference type="Rhea" id="RHEA:35944"/>
    </physiologicalReaction>
</comment>
<comment type="biophysicochemical properties">
    <kinetics>
        <KM evidence="4">32 uM for brevianamide F</KM>
        <KM evidence="4">98 uM for Dimethylallyl diphosphate (DMAPP)</KM>
        <KM evidence="4">32 uM for cyclo-L-Trp-L-Pro</KM>
        <KM evidence="4">82 uM for cyclo-L-Trp-D-Pro</KM>
        <KM evidence="4">709 uM for cyclo-D-Trp-D-Pro</KM>
        <KM evidence="4">2906 uM for cyclo-D-Trp-L-Pro</KM>
        <KM evidence="4">942 uM for cyclo-L-Trp-L-Ala</KM>
        <KM evidence="4">793 uM for cyclo-L-Trp-D-Ala</KM>
        <KM evidence="4">1318 uM for cyclo-D-Trp-D-Ala</KM>
        <KM evidence="4">139 uM for cyclo-D-Trp-L-Ala</KM>
        <KM evidence="4">1300 uM for cyclo-L-Trp-Gly</KM>
        <KM evidence="4">106 uM for cyclo-L-Trp-L-Leu</KM>
        <KM evidence="4">94 uM for cyclo-L-Trp-L-Phe</KM>
        <KM evidence="4">2148 uM for cyclo-L-Trp-L-Tyr</KM>
    </kinetics>
</comment>
<comment type="pathway">
    <text evidence="4">Alkaloid biosynthesis.</text>
</comment>
<comment type="subunit">
    <text evidence="4">Monomer.</text>
</comment>
<comment type="biotechnology">
    <text evidence="3">Notoamides have been shown to exhibit antitumoral activities (PubMed:17304611). Notoamides A-C show moderate cytotoxicity against HeLa and L1210 cells with IC(50) values in the range of 22-52 mg/ml, but the IC(50) value of notoamide D is greater than 100 mg/ml (PubMed:17304611). Moreover, notoamide C induces G2/M-cell cycle arrest at a concentration of 6.3 mg/ml (PubMed:17304611).</text>
</comment>
<comment type="similarity">
    <text evidence="8">Belongs to the tryptophan dimethylallyltransferase family.</text>
</comment>
<accession>I4AY86</accession>
<accession>L7WRR0</accession>
<keyword id="KW-0017">Alkaloid metabolism</keyword>
<keyword id="KW-0637">Prenyltransferase</keyword>
<keyword id="KW-0808">Transferase</keyword>
<gene>
    <name evidence="6" type="primary">brePT</name>
    <name evidence="7" type="synonym">notF'</name>
</gene>
<protein>
    <recommendedName>
        <fullName>Deoxybrevianamide E synthase</fullName>
        <ecNumber evidence="4">2.5.1.109</ecNumber>
    </recommendedName>
    <alternativeName>
        <fullName evidence="6">Brevianamide F reverse prenyltransferase</fullName>
    </alternativeName>
    <alternativeName>
        <fullName evidence="7">Notoamide biosynthesis cluster protein A'</fullName>
    </alternativeName>
</protein>
<proteinExistence type="evidence at protein level"/>
<reference key="1">
    <citation type="journal article" date="2013" name="Appl. Microbiol. Biotechnol.">
        <title>Identification of a brevianamide F reverse prenyltransferase BrePT from Aspergillus versicolor with a broad substrate specificity towards tryptophan-containing cyclic dipeptides.</title>
        <authorList>
            <person name="Yin S."/>
            <person name="Yu X."/>
            <person name="Wang Q."/>
            <person name="Liu X.Q."/>
            <person name="Li S.M."/>
        </authorList>
    </citation>
    <scope>NUCLEOTIDE SEQUENCE [GENOMIC DNA]</scope>
    <scope>SUBUNIT</scope>
    <scope>PATHWAY</scope>
    <scope>FUNCTION</scope>
    <scope>CATALYTIC ACTIVITY</scope>
    <scope>BIOPHYSICOCHEMICAL PROPERTIES</scope>
    <source>
        <strain>NRRL 573</strain>
    </source>
</reference>
<reference key="2">
    <citation type="journal article" date="2012" name="Med. Chem. Commun.">
        <title>Comparative analysis of the biosynthetic systems for fungal bicyclo[2.2.2]diazaoctane indole alkaloids: the (+)/(-)-notoamide, paraherquamide and malbrancheamide pathways.</title>
        <authorList>
            <person name="Li S."/>
            <person name="Anand K."/>
            <person name="Tran H."/>
            <person name="Yu F."/>
            <person name="Finefield J.M."/>
            <person name="Sunderhaus J.D."/>
            <person name="McAfoos T.J."/>
            <person name="Tsukamoto S."/>
            <person name="Williams R.M."/>
            <person name="Sherman D.H."/>
        </authorList>
    </citation>
    <scope>NUCLEOTIDE SEQUENCE [GENOMIC DNA]</scope>
    <scope>FUNCTION</scope>
    <source>
        <strain>NRRL 35600</strain>
    </source>
</reference>
<reference key="3">
    <citation type="journal article" date="2007" name="Angew. Chem. Int. Ed.">
        <title>Notoamides A-D: prenylated indole alkaloids isolated from a marine-derived fungus, Aspergillus sp.</title>
        <authorList>
            <person name="Kato H."/>
            <person name="Yoshida T."/>
            <person name="Tokue T."/>
            <person name="Nojiri Y."/>
            <person name="Hirota H."/>
            <person name="Ohta T."/>
            <person name="Williams R.M."/>
            <person name="Tsukamoto S."/>
        </authorList>
    </citation>
    <scope>BIOTECHNOLOGY</scope>
</reference>
<organism>
    <name type="scientific">Aspergillus versicolor</name>
    <dbReference type="NCBI Taxonomy" id="46472"/>
    <lineage>
        <taxon>Eukaryota</taxon>
        <taxon>Fungi</taxon>
        <taxon>Dikarya</taxon>
        <taxon>Ascomycota</taxon>
        <taxon>Pezizomycotina</taxon>
        <taxon>Eurotiomycetes</taxon>
        <taxon>Eurotiomycetidae</taxon>
        <taxon>Eurotiales</taxon>
        <taxon>Aspergillaceae</taxon>
        <taxon>Aspergillus</taxon>
        <taxon>Aspergillus subgen. Nidulantes</taxon>
    </lineage>
</organism>
<sequence>MTAPELRAPAGHPQEPPARSSPAQALSSYHHFPTSDQERWYQETGSLCSRFLEAGQYGLHQQYQFMFFFMHHLIPALGPYPQKWRSTISRSGLPIEFSLNFQKGSHRLLRIGFEPVNFLSGSSQDPFNRIPIADLLAQLARLQLRGFDTQCFQQLLTRFQLSLDEVRQLPPDDQPLKSQGAFGFDFNPDGAILVKGYVFPYLKAKAAGVPVATLIAESVRAIDADRNQFMHAFSLINDYMQESTGYNEYTFLSCDLVEMSRQRVKIYGAHTEVTWAKIAEMWTLGGRLIEEPEIMEGLARLKQIWSLLQIGEGSRAFKGGFDYGKASATDQIPSPIIWNYEISPGSSFPVPKFYLPVHGENDLRVARSLAQFWDSLGWSEHACAYPDMLQQLYPDLDVSRTSRLQSWISYSYTAKKGVYMSVYFHSQSTYLWEED</sequence>
<dbReference type="EC" id="2.5.1.109" evidence="4"/>
<dbReference type="EMBL" id="JQ013953">
    <property type="protein sequence ID" value="AFM09725.1"/>
    <property type="molecule type" value="Genomic_DNA"/>
</dbReference>
<dbReference type="EMBL" id="JQ708194">
    <property type="protein sequence ID" value="AGC83577.1"/>
    <property type="molecule type" value="Genomic_DNA"/>
</dbReference>
<dbReference type="SMR" id="I4AY86"/>
<dbReference type="KEGG" id="ag:AFM09725"/>
<dbReference type="VEuPathDB" id="FungiDB:ASPVEDRAFT_133177"/>
<dbReference type="BioCyc" id="MetaCyc:MONOMER-19052"/>
<dbReference type="BRENDA" id="2.5.1.109">
    <property type="organism ID" value="542"/>
</dbReference>
<dbReference type="GO" id="GO:0004659">
    <property type="term" value="F:prenyltransferase activity"/>
    <property type="evidence" value="ECO:0007669"/>
    <property type="project" value="UniProtKB-KW"/>
</dbReference>
<dbReference type="GO" id="GO:0009820">
    <property type="term" value="P:alkaloid metabolic process"/>
    <property type="evidence" value="ECO:0007669"/>
    <property type="project" value="UniProtKB-KW"/>
</dbReference>
<dbReference type="CDD" id="cd13929">
    <property type="entry name" value="PT-DMATS_CymD"/>
    <property type="match status" value="1"/>
</dbReference>
<dbReference type="InterPro" id="IPR033964">
    <property type="entry name" value="Aro_prenylTrfase"/>
</dbReference>
<dbReference type="InterPro" id="IPR017795">
    <property type="entry name" value="Aro_prenylTrfase_DMATS"/>
</dbReference>
<dbReference type="InterPro" id="IPR012148">
    <property type="entry name" value="DMATS-type_fun"/>
</dbReference>
<dbReference type="NCBIfam" id="TIGR03429">
    <property type="entry name" value="arom_pren_DMATS"/>
    <property type="match status" value="1"/>
</dbReference>
<dbReference type="PANTHER" id="PTHR40627">
    <property type="entry name" value="INDOLE PRENYLTRANSFERASE TDIB-RELATED"/>
    <property type="match status" value="1"/>
</dbReference>
<dbReference type="PANTHER" id="PTHR40627:SF3">
    <property type="entry name" value="PRENYLTRANSFERASE ASQH2-RELATED"/>
    <property type="match status" value="1"/>
</dbReference>
<dbReference type="Pfam" id="PF11991">
    <property type="entry name" value="Trp_DMAT"/>
    <property type="match status" value="1"/>
</dbReference>
<dbReference type="PIRSF" id="PIRSF000509">
    <property type="entry name" value="Trp_DMAT"/>
    <property type="match status" value="1"/>
</dbReference>
<dbReference type="SFLD" id="SFLDS00036">
    <property type="entry name" value="Aromatic_Prenyltransferase"/>
    <property type="match status" value="1"/>
</dbReference>
<dbReference type="SFLD" id="SFLDG01162">
    <property type="entry name" value="I"/>
    <property type="match status" value="1"/>
</dbReference>